<name>LACC_STRP6</name>
<gene>
    <name evidence="1" type="primary">lacC</name>
    <name type="ordered locus">M6_Spy1645</name>
</gene>
<keyword id="KW-0067">ATP-binding</keyword>
<keyword id="KW-0418">Kinase</keyword>
<keyword id="KW-0423">Lactose metabolism</keyword>
<keyword id="KW-0547">Nucleotide-binding</keyword>
<keyword id="KW-0808">Transferase</keyword>
<dbReference type="EC" id="2.7.1.144" evidence="1"/>
<dbReference type="EMBL" id="CP000003">
    <property type="protein sequence ID" value="AAT87780.1"/>
    <property type="molecule type" value="Genomic_DNA"/>
</dbReference>
<dbReference type="RefSeq" id="WP_011184965.1">
    <property type="nucleotide sequence ID" value="NC_006086.1"/>
</dbReference>
<dbReference type="SMR" id="Q5X9Y3"/>
<dbReference type="KEGG" id="spa:M6_Spy1645"/>
<dbReference type="HOGENOM" id="CLU_050013_5_0_9"/>
<dbReference type="UniPathway" id="UPA00704">
    <property type="reaction ID" value="UER00715"/>
</dbReference>
<dbReference type="Proteomes" id="UP000001167">
    <property type="component" value="Chromosome"/>
</dbReference>
<dbReference type="GO" id="GO:0005829">
    <property type="term" value="C:cytosol"/>
    <property type="evidence" value="ECO:0007669"/>
    <property type="project" value="TreeGrafter"/>
</dbReference>
<dbReference type="GO" id="GO:0005524">
    <property type="term" value="F:ATP binding"/>
    <property type="evidence" value="ECO:0007669"/>
    <property type="project" value="UniProtKB-KW"/>
</dbReference>
<dbReference type="GO" id="GO:0008443">
    <property type="term" value="F:phosphofructokinase activity"/>
    <property type="evidence" value="ECO:0007669"/>
    <property type="project" value="TreeGrafter"/>
</dbReference>
<dbReference type="GO" id="GO:0009024">
    <property type="term" value="F:tagatose-6-phosphate kinase activity"/>
    <property type="evidence" value="ECO:0007669"/>
    <property type="project" value="UniProtKB-UniRule"/>
</dbReference>
<dbReference type="GO" id="GO:2001059">
    <property type="term" value="P:D-tagatose 6-phosphate catabolic process"/>
    <property type="evidence" value="ECO:0007669"/>
    <property type="project" value="UniProtKB-UniRule"/>
</dbReference>
<dbReference type="GO" id="GO:0019512">
    <property type="term" value="P:lactose catabolic process via tagatose-6-phosphate"/>
    <property type="evidence" value="ECO:0007669"/>
    <property type="project" value="InterPro"/>
</dbReference>
<dbReference type="CDD" id="cd01164">
    <property type="entry name" value="FruK_PfkB_like"/>
    <property type="match status" value="1"/>
</dbReference>
<dbReference type="FunFam" id="3.40.1190.20:FF:000001">
    <property type="entry name" value="Phosphofructokinase"/>
    <property type="match status" value="1"/>
</dbReference>
<dbReference type="Gene3D" id="3.40.1190.20">
    <property type="match status" value="1"/>
</dbReference>
<dbReference type="HAMAP" id="MF_01557">
    <property type="entry name" value="LacC"/>
    <property type="match status" value="1"/>
</dbReference>
<dbReference type="InterPro" id="IPR005926">
    <property type="entry name" value="LacC"/>
</dbReference>
<dbReference type="InterPro" id="IPR011611">
    <property type="entry name" value="PfkB_dom"/>
</dbReference>
<dbReference type="InterPro" id="IPR029056">
    <property type="entry name" value="Ribokinase-like"/>
</dbReference>
<dbReference type="InterPro" id="IPR017583">
    <property type="entry name" value="Tagatose/fructose_Pkinase"/>
</dbReference>
<dbReference type="NCBIfam" id="TIGR03168">
    <property type="entry name" value="1-PFK"/>
    <property type="match status" value="1"/>
</dbReference>
<dbReference type="NCBIfam" id="TIGR01231">
    <property type="entry name" value="lacC"/>
    <property type="match status" value="1"/>
</dbReference>
<dbReference type="NCBIfam" id="NF010033">
    <property type="entry name" value="PRK13508.1"/>
    <property type="match status" value="1"/>
</dbReference>
<dbReference type="PANTHER" id="PTHR46566:SF5">
    <property type="entry name" value="1-PHOSPHOFRUCTOKINASE"/>
    <property type="match status" value="1"/>
</dbReference>
<dbReference type="PANTHER" id="PTHR46566">
    <property type="entry name" value="1-PHOSPHOFRUCTOKINASE-RELATED"/>
    <property type="match status" value="1"/>
</dbReference>
<dbReference type="Pfam" id="PF00294">
    <property type="entry name" value="PfkB"/>
    <property type="match status" value="1"/>
</dbReference>
<dbReference type="PIRSF" id="PIRSF000535">
    <property type="entry name" value="1PFK/6PFK/LacC"/>
    <property type="match status" value="1"/>
</dbReference>
<dbReference type="SUPFAM" id="SSF53613">
    <property type="entry name" value="Ribokinase-like"/>
    <property type="match status" value="1"/>
</dbReference>
<accession>Q5X9Y3</accession>
<proteinExistence type="inferred from homology"/>
<sequence length="309" mass="33487">MILTVTLNPAIDVSYPLDELKCDTVNRVVDVTKTPGGKGLNVCRVLNDFGETVKATGCIGGESGDFIINHLPDSILSRFYKISGDTRTCIAILHEGNQTEILEKGPLLSVNEIDGFTHHFKYLLNDVDVVTLSDSLPAGMPDDYYQKLIGIANLNGKKTVLDCSGNALEAVLKGDSKPTVIKPNLEELSQLLGKEMTKDFDALKEVLQDKLFDGIEWIIVSLGADGVFAKHKDTFYKVDIPKIKIVSAVGSGDSTVAGIASGLANDEDDRALLTKANVLGMLNAQEKTTGHVNMANYDKLYQSIKVKEV</sequence>
<comment type="catalytic activity">
    <reaction evidence="1">
        <text>D-tagatofuranose 6-phosphate + ATP = D-tagatofuranose 1,6-bisphosphate + ADP + H(+)</text>
        <dbReference type="Rhea" id="RHEA:12420"/>
        <dbReference type="ChEBI" id="CHEBI:15378"/>
        <dbReference type="ChEBI" id="CHEBI:30616"/>
        <dbReference type="ChEBI" id="CHEBI:58694"/>
        <dbReference type="ChEBI" id="CHEBI:58695"/>
        <dbReference type="ChEBI" id="CHEBI:456216"/>
        <dbReference type="EC" id="2.7.1.144"/>
    </reaction>
</comment>
<comment type="pathway">
    <text evidence="1">Carbohydrate metabolism; D-tagatose 6-phosphate degradation; D-glyceraldehyde 3-phosphate and glycerone phosphate from D-tagatose 6-phosphate: step 1/2.</text>
</comment>
<comment type="similarity">
    <text evidence="1">Belongs to the carbohydrate kinase PfkB family. LacC subfamily.</text>
</comment>
<reference key="1">
    <citation type="journal article" date="2004" name="J. Infect. Dis.">
        <title>Progress toward characterization of the group A Streptococcus metagenome: complete genome sequence of a macrolide-resistant serotype M6 strain.</title>
        <authorList>
            <person name="Banks D.J."/>
            <person name="Porcella S.F."/>
            <person name="Barbian K.D."/>
            <person name="Beres S.B."/>
            <person name="Philips L.E."/>
            <person name="Voyich J.M."/>
            <person name="DeLeo F.R."/>
            <person name="Martin J.M."/>
            <person name="Somerville G.A."/>
            <person name="Musser J.M."/>
        </authorList>
    </citation>
    <scope>NUCLEOTIDE SEQUENCE [LARGE SCALE GENOMIC DNA]</scope>
    <source>
        <strain>ATCC BAA-946 / MGAS10394</strain>
    </source>
</reference>
<evidence type="ECO:0000255" key="1">
    <source>
        <dbReference type="HAMAP-Rule" id="MF_01557"/>
    </source>
</evidence>
<feature type="chain" id="PRO_0000203937" description="Tagatose-6-phosphate kinase">
    <location>
        <begin position="1"/>
        <end position="309"/>
    </location>
</feature>
<protein>
    <recommendedName>
        <fullName evidence="1">Tagatose-6-phosphate kinase</fullName>
        <ecNumber evidence="1">2.7.1.144</ecNumber>
    </recommendedName>
    <alternativeName>
        <fullName evidence="1">Phosphotagatokinase</fullName>
    </alternativeName>
</protein>
<organism>
    <name type="scientific">Streptococcus pyogenes serotype M6 (strain ATCC BAA-946 / MGAS10394)</name>
    <dbReference type="NCBI Taxonomy" id="286636"/>
    <lineage>
        <taxon>Bacteria</taxon>
        <taxon>Bacillati</taxon>
        <taxon>Bacillota</taxon>
        <taxon>Bacilli</taxon>
        <taxon>Lactobacillales</taxon>
        <taxon>Streptococcaceae</taxon>
        <taxon>Streptococcus</taxon>
    </lineage>
</organism>